<sequence length="525" mass="55672">MEGPAEWGPEAALGPEAVLRFLAERGGRALHAELVQHFRGALGGEPEQRARARAHFKELVNAVATVRVDPADGAKYVHLKKRFCEGPSEPSGDPPRIQVTAEPEAPDGPAGPEARDRLPDAAAPESLPGQGRELGEGEPPAPAHWPPLSAGARRKNSRRDVQPLPRTPAPGPSEDLELPPHGCEEADRGSSLVGATAQRPARQNLRDLVMGSSPQLKRSVCPGGSSPGSSSGGGRGRGGGDSDSASVASSSAEEESSGGGSVTLDPLEHAWMLSASDGKWDSLEGLLTCEPGLLVKRDFITGFTCLHWAAKHGRQELLAMLVNFANKHQLPVNIDARTSGGYTALHLAAMHGHVEVVKLLVGAYDADVDIRDYSGKKASQYLSRSIAEEIKNLVGALDEGDGESAAGSGGGRWRLSKVLPSHLITYKLSHALEDGGDHHHHHHSAEGWVGGKAKDPGRKASGSSSGRIKPRLNKIRFRTQIVHTTPSFRDPEQPLEGRGEEGVGEERPVKGHSPFTLRPKSNVFG</sequence>
<name>SWAHC_HUMAN</name>
<gene>
    <name type="primary">SOWAHC</name>
    <name type="synonym">ANKRD57</name>
    <name type="synonym">C2orf26</name>
</gene>
<accession>Q53LP3</accession>
<accession>Q8NE15</accession>
<accession>Q9H6U1</accession>
<feature type="chain" id="PRO_0000274340" description="Ankyrin repeat domain-containing protein SOWAHC">
    <location>
        <begin position="1"/>
        <end position="525"/>
    </location>
</feature>
<feature type="repeat" description="ANK 1">
    <location>
        <begin position="301"/>
        <end position="330"/>
    </location>
</feature>
<feature type="repeat" description="ANK 2">
    <location>
        <begin position="340"/>
        <end position="370"/>
    </location>
</feature>
<feature type="region of interest" description="Disordered" evidence="2">
    <location>
        <begin position="84"/>
        <end position="263"/>
    </location>
</feature>
<feature type="region of interest" description="Disordered" evidence="2">
    <location>
        <begin position="434"/>
        <end position="525"/>
    </location>
</feature>
<feature type="compositionally biased region" description="Low complexity" evidence="2">
    <location>
        <begin position="101"/>
        <end position="112"/>
    </location>
</feature>
<feature type="compositionally biased region" description="Gly residues" evidence="2">
    <location>
        <begin position="230"/>
        <end position="241"/>
    </location>
</feature>
<feature type="compositionally biased region" description="Low complexity" evidence="2">
    <location>
        <begin position="242"/>
        <end position="251"/>
    </location>
</feature>
<feature type="compositionally biased region" description="Basic residues" evidence="2">
    <location>
        <begin position="468"/>
        <end position="477"/>
    </location>
</feature>
<feature type="compositionally biased region" description="Basic and acidic residues" evidence="2">
    <location>
        <begin position="489"/>
        <end position="509"/>
    </location>
</feature>
<feature type="modified residue" description="Phosphoserine" evidence="1">
    <location>
        <position position="88"/>
    </location>
</feature>
<feature type="modified residue" description="Phosphoserine" evidence="8">
    <location>
        <position position="126"/>
    </location>
</feature>
<feature type="modified residue" description="Phosphoserine" evidence="5 6 7">
    <location>
        <position position="213"/>
    </location>
</feature>
<feature type="modified residue" description="Phosphoserine" evidence="4">
    <location>
        <position position="226"/>
    </location>
</feature>
<feature type="sequence conflict" description="In Ref. 1; BAB15161." evidence="3" ref="1">
    <original>H</original>
    <variation>R</variation>
    <location>
        <position position="307"/>
    </location>
</feature>
<feature type="sequence conflict" description="In Ref. 1; BAB15161." evidence="3" ref="1">
    <original>L</original>
    <variation>V</variation>
    <location>
        <position position="318"/>
    </location>
</feature>
<feature type="sequence conflict" description="In Ref. 1; BAB15161." evidence="3" ref="1">
    <original>I</original>
    <variation>M</variation>
    <location>
        <position position="334"/>
    </location>
</feature>
<protein>
    <recommendedName>
        <fullName>Ankyrin repeat domain-containing protein SOWAHC</fullName>
    </recommendedName>
    <alternativeName>
        <fullName>Ankyrin repeat domain-containing protein 57</fullName>
    </alternativeName>
    <alternativeName>
        <fullName>Protein sosondowah homolog C</fullName>
    </alternativeName>
</protein>
<evidence type="ECO:0000250" key="1">
    <source>
        <dbReference type="UniProtKB" id="Q8C0J6"/>
    </source>
</evidence>
<evidence type="ECO:0000256" key="2">
    <source>
        <dbReference type="SAM" id="MobiDB-lite"/>
    </source>
</evidence>
<evidence type="ECO:0000305" key="3"/>
<evidence type="ECO:0007744" key="4">
    <source>
    </source>
</evidence>
<evidence type="ECO:0007744" key="5">
    <source>
    </source>
</evidence>
<evidence type="ECO:0007744" key="6">
    <source>
    </source>
</evidence>
<evidence type="ECO:0007744" key="7">
    <source>
    </source>
</evidence>
<evidence type="ECO:0007744" key="8">
    <source>
    </source>
</evidence>
<proteinExistence type="evidence at protein level"/>
<dbReference type="EMBL" id="AK025523">
    <property type="protein sequence ID" value="BAB15161.1"/>
    <property type="status" value="ALT_FRAME"/>
    <property type="molecule type" value="mRNA"/>
</dbReference>
<dbReference type="EMBL" id="AC140485">
    <property type="protein sequence ID" value="AAY24143.1"/>
    <property type="molecule type" value="Genomic_DNA"/>
</dbReference>
<dbReference type="EMBL" id="AC011753">
    <property type="protein sequence ID" value="AAY24292.1"/>
    <property type="molecule type" value="Genomic_DNA"/>
</dbReference>
<dbReference type="EMBL" id="BC036652">
    <property type="protein sequence ID" value="AAH36652.2"/>
    <property type="molecule type" value="mRNA"/>
</dbReference>
<dbReference type="CCDS" id="CCDS33270.1"/>
<dbReference type="RefSeq" id="NP_075392.2">
    <property type="nucleotide sequence ID" value="NM_023016.4"/>
</dbReference>
<dbReference type="SMR" id="Q53LP3"/>
<dbReference type="BioGRID" id="122402">
    <property type="interactions" value="27"/>
</dbReference>
<dbReference type="FunCoup" id="Q53LP3">
    <property type="interactions" value="167"/>
</dbReference>
<dbReference type="IntAct" id="Q53LP3">
    <property type="interactions" value="7"/>
</dbReference>
<dbReference type="STRING" id="9606.ENSP00000365830"/>
<dbReference type="iPTMnet" id="Q53LP3"/>
<dbReference type="PhosphoSitePlus" id="Q53LP3"/>
<dbReference type="BioMuta" id="SOWAHC"/>
<dbReference type="DMDM" id="74740628"/>
<dbReference type="jPOST" id="Q53LP3"/>
<dbReference type="MassIVE" id="Q53LP3"/>
<dbReference type="PaxDb" id="9606-ENSP00000365830"/>
<dbReference type="PeptideAtlas" id="Q53LP3"/>
<dbReference type="ProteomicsDB" id="62510"/>
<dbReference type="Pumba" id="Q53LP3"/>
<dbReference type="Antibodypedia" id="33168">
    <property type="antibodies" value="102 antibodies from 18 providers"/>
</dbReference>
<dbReference type="DNASU" id="65124"/>
<dbReference type="Ensembl" id="ENST00000356454.5">
    <property type="protein sequence ID" value="ENSP00000365830.2"/>
    <property type="gene ID" value="ENSG00000198142.5"/>
</dbReference>
<dbReference type="GeneID" id="65124"/>
<dbReference type="KEGG" id="hsa:65124"/>
<dbReference type="MANE-Select" id="ENST00000356454.5">
    <property type="protein sequence ID" value="ENSP00000365830.2"/>
    <property type="RefSeq nucleotide sequence ID" value="NM_023016.4"/>
    <property type="RefSeq protein sequence ID" value="NP_075392.2"/>
</dbReference>
<dbReference type="UCSC" id="uc002tfb.4">
    <property type="organism name" value="human"/>
</dbReference>
<dbReference type="AGR" id="HGNC:26149"/>
<dbReference type="CTD" id="65124"/>
<dbReference type="DisGeNET" id="65124"/>
<dbReference type="GeneCards" id="SOWAHC"/>
<dbReference type="HGNC" id="HGNC:26149">
    <property type="gene designation" value="SOWAHC"/>
</dbReference>
<dbReference type="HPA" id="ENSG00000198142">
    <property type="expression patterns" value="Low tissue specificity"/>
</dbReference>
<dbReference type="neXtProt" id="NX_Q53LP3"/>
<dbReference type="OpenTargets" id="ENSG00000198142"/>
<dbReference type="PharmGKB" id="PA134882354"/>
<dbReference type="VEuPathDB" id="HostDB:ENSG00000198142"/>
<dbReference type="eggNOG" id="ENOG502QVDE">
    <property type="taxonomic scope" value="Eukaryota"/>
</dbReference>
<dbReference type="GeneTree" id="ENSGT00950000183003"/>
<dbReference type="HOGENOM" id="CLU_041239_2_0_1"/>
<dbReference type="InParanoid" id="Q53LP3"/>
<dbReference type="OMA" id="RYCAPEP"/>
<dbReference type="OrthoDB" id="60433at2759"/>
<dbReference type="PAN-GO" id="Q53LP3">
    <property type="GO annotations" value="0 GO annotations based on evolutionary models"/>
</dbReference>
<dbReference type="PhylomeDB" id="Q53LP3"/>
<dbReference type="TreeFam" id="TF331362"/>
<dbReference type="PathwayCommons" id="Q53LP3"/>
<dbReference type="Reactome" id="R-HSA-8980692">
    <property type="pathway name" value="RHOA GTPase cycle"/>
</dbReference>
<dbReference type="Reactome" id="R-HSA-9013026">
    <property type="pathway name" value="RHOB GTPase cycle"/>
</dbReference>
<dbReference type="Reactome" id="R-HSA-9035034">
    <property type="pathway name" value="RHOF GTPase cycle"/>
</dbReference>
<dbReference type="SignaLink" id="Q53LP3"/>
<dbReference type="BioGRID-ORCS" id="65124">
    <property type="hits" value="18 hits in 1144 CRISPR screens"/>
</dbReference>
<dbReference type="GenomeRNAi" id="65124"/>
<dbReference type="Pharos" id="Q53LP3">
    <property type="development level" value="Tdark"/>
</dbReference>
<dbReference type="PRO" id="PR:Q53LP3"/>
<dbReference type="Proteomes" id="UP000005640">
    <property type="component" value="Chromosome 2"/>
</dbReference>
<dbReference type="RNAct" id="Q53LP3">
    <property type="molecule type" value="protein"/>
</dbReference>
<dbReference type="Bgee" id="ENSG00000198142">
    <property type="expression patterns" value="Expressed in esophagus squamous epithelium and 184 other cell types or tissues"/>
</dbReference>
<dbReference type="Gene3D" id="1.25.40.20">
    <property type="entry name" value="Ankyrin repeat-containing domain"/>
    <property type="match status" value="1"/>
</dbReference>
<dbReference type="InterPro" id="IPR002110">
    <property type="entry name" value="Ankyrin_rpt"/>
</dbReference>
<dbReference type="InterPro" id="IPR036770">
    <property type="entry name" value="Ankyrin_rpt-contain_sf"/>
</dbReference>
<dbReference type="PANTHER" id="PTHR14491:SF4">
    <property type="entry name" value="ANKYRIN REPEAT DOMAIN-CONTAINING PROTEIN SOWAHC"/>
    <property type="match status" value="1"/>
</dbReference>
<dbReference type="PANTHER" id="PTHR14491">
    <property type="entry name" value="SOSONDOWAH, ISOFORM G"/>
    <property type="match status" value="1"/>
</dbReference>
<dbReference type="Pfam" id="PF12796">
    <property type="entry name" value="Ank_2"/>
    <property type="match status" value="1"/>
</dbReference>
<dbReference type="SMART" id="SM00248">
    <property type="entry name" value="ANK"/>
    <property type="match status" value="2"/>
</dbReference>
<dbReference type="SUPFAM" id="SSF48403">
    <property type="entry name" value="Ankyrin repeat"/>
    <property type="match status" value="1"/>
</dbReference>
<dbReference type="PROSITE" id="PS50297">
    <property type="entry name" value="ANK_REP_REGION"/>
    <property type="match status" value="1"/>
</dbReference>
<dbReference type="PROSITE" id="PS50088">
    <property type="entry name" value="ANK_REPEAT"/>
    <property type="match status" value="1"/>
</dbReference>
<reference key="1">
    <citation type="journal article" date="2004" name="Nat. Genet.">
        <title>Complete sequencing and characterization of 21,243 full-length human cDNAs.</title>
        <authorList>
            <person name="Ota T."/>
            <person name="Suzuki Y."/>
            <person name="Nishikawa T."/>
            <person name="Otsuki T."/>
            <person name="Sugiyama T."/>
            <person name="Irie R."/>
            <person name="Wakamatsu A."/>
            <person name="Hayashi K."/>
            <person name="Sato H."/>
            <person name="Nagai K."/>
            <person name="Kimura K."/>
            <person name="Makita H."/>
            <person name="Sekine M."/>
            <person name="Obayashi M."/>
            <person name="Nishi T."/>
            <person name="Shibahara T."/>
            <person name="Tanaka T."/>
            <person name="Ishii S."/>
            <person name="Yamamoto J."/>
            <person name="Saito K."/>
            <person name="Kawai Y."/>
            <person name="Isono Y."/>
            <person name="Nakamura Y."/>
            <person name="Nagahari K."/>
            <person name="Murakami K."/>
            <person name="Yasuda T."/>
            <person name="Iwayanagi T."/>
            <person name="Wagatsuma M."/>
            <person name="Shiratori A."/>
            <person name="Sudo H."/>
            <person name="Hosoiri T."/>
            <person name="Kaku Y."/>
            <person name="Kodaira H."/>
            <person name="Kondo H."/>
            <person name="Sugawara M."/>
            <person name="Takahashi M."/>
            <person name="Kanda K."/>
            <person name="Yokoi T."/>
            <person name="Furuya T."/>
            <person name="Kikkawa E."/>
            <person name="Omura Y."/>
            <person name="Abe K."/>
            <person name="Kamihara K."/>
            <person name="Katsuta N."/>
            <person name="Sato K."/>
            <person name="Tanikawa M."/>
            <person name="Yamazaki M."/>
            <person name="Ninomiya K."/>
            <person name="Ishibashi T."/>
            <person name="Yamashita H."/>
            <person name="Murakawa K."/>
            <person name="Fujimori K."/>
            <person name="Tanai H."/>
            <person name="Kimata M."/>
            <person name="Watanabe M."/>
            <person name="Hiraoka S."/>
            <person name="Chiba Y."/>
            <person name="Ishida S."/>
            <person name="Ono Y."/>
            <person name="Takiguchi S."/>
            <person name="Watanabe S."/>
            <person name="Yosida M."/>
            <person name="Hotuta T."/>
            <person name="Kusano J."/>
            <person name="Kanehori K."/>
            <person name="Takahashi-Fujii A."/>
            <person name="Hara H."/>
            <person name="Tanase T.-O."/>
            <person name="Nomura Y."/>
            <person name="Togiya S."/>
            <person name="Komai F."/>
            <person name="Hara R."/>
            <person name="Takeuchi K."/>
            <person name="Arita M."/>
            <person name="Imose N."/>
            <person name="Musashino K."/>
            <person name="Yuuki H."/>
            <person name="Oshima A."/>
            <person name="Sasaki N."/>
            <person name="Aotsuka S."/>
            <person name="Yoshikawa Y."/>
            <person name="Matsunawa H."/>
            <person name="Ichihara T."/>
            <person name="Shiohata N."/>
            <person name="Sano S."/>
            <person name="Moriya S."/>
            <person name="Momiyama H."/>
            <person name="Satoh N."/>
            <person name="Takami S."/>
            <person name="Terashima Y."/>
            <person name="Suzuki O."/>
            <person name="Nakagawa S."/>
            <person name="Senoh A."/>
            <person name="Mizoguchi H."/>
            <person name="Goto Y."/>
            <person name="Shimizu F."/>
            <person name="Wakebe H."/>
            <person name="Hishigaki H."/>
            <person name="Watanabe T."/>
            <person name="Sugiyama A."/>
            <person name="Takemoto M."/>
            <person name="Kawakami B."/>
            <person name="Yamazaki M."/>
            <person name="Watanabe K."/>
            <person name="Kumagai A."/>
            <person name="Itakura S."/>
            <person name="Fukuzumi Y."/>
            <person name="Fujimori Y."/>
            <person name="Komiyama M."/>
            <person name="Tashiro H."/>
            <person name="Tanigami A."/>
            <person name="Fujiwara T."/>
            <person name="Ono T."/>
            <person name="Yamada K."/>
            <person name="Fujii Y."/>
            <person name="Ozaki K."/>
            <person name="Hirao M."/>
            <person name="Ohmori Y."/>
            <person name="Kawabata A."/>
            <person name="Hikiji T."/>
            <person name="Kobatake N."/>
            <person name="Inagaki H."/>
            <person name="Ikema Y."/>
            <person name="Okamoto S."/>
            <person name="Okitani R."/>
            <person name="Kawakami T."/>
            <person name="Noguchi S."/>
            <person name="Itoh T."/>
            <person name="Shigeta K."/>
            <person name="Senba T."/>
            <person name="Matsumura K."/>
            <person name="Nakajima Y."/>
            <person name="Mizuno T."/>
            <person name="Morinaga M."/>
            <person name="Sasaki M."/>
            <person name="Togashi T."/>
            <person name="Oyama M."/>
            <person name="Hata H."/>
            <person name="Watanabe M."/>
            <person name="Komatsu T."/>
            <person name="Mizushima-Sugano J."/>
            <person name="Satoh T."/>
            <person name="Shirai Y."/>
            <person name="Takahashi Y."/>
            <person name="Nakagawa K."/>
            <person name="Okumura K."/>
            <person name="Nagase T."/>
            <person name="Nomura N."/>
            <person name="Kikuchi H."/>
            <person name="Masuho Y."/>
            <person name="Yamashita R."/>
            <person name="Nakai K."/>
            <person name="Yada T."/>
            <person name="Nakamura Y."/>
            <person name="Ohara O."/>
            <person name="Isogai T."/>
            <person name="Sugano S."/>
        </authorList>
    </citation>
    <scope>NUCLEOTIDE SEQUENCE [LARGE SCALE MRNA]</scope>
</reference>
<reference key="2">
    <citation type="journal article" date="2005" name="Nature">
        <title>Generation and annotation of the DNA sequences of human chromosomes 2 and 4.</title>
        <authorList>
            <person name="Hillier L.W."/>
            <person name="Graves T.A."/>
            <person name="Fulton R.S."/>
            <person name="Fulton L.A."/>
            <person name="Pepin K.H."/>
            <person name="Minx P."/>
            <person name="Wagner-McPherson C."/>
            <person name="Layman D."/>
            <person name="Wylie K."/>
            <person name="Sekhon M."/>
            <person name="Becker M.C."/>
            <person name="Fewell G.A."/>
            <person name="Delehaunty K.D."/>
            <person name="Miner T.L."/>
            <person name="Nash W.E."/>
            <person name="Kremitzki C."/>
            <person name="Oddy L."/>
            <person name="Du H."/>
            <person name="Sun H."/>
            <person name="Bradshaw-Cordum H."/>
            <person name="Ali J."/>
            <person name="Carter J."/>
            <person name="Cordes M."/>
            <person name="Harris A."/>
            <person name="Isak A."/>
            <person name="van Brunt A."/>
            <person name="Nguyen C."/>
            <person name="Du F."/>
            <person name="Courtney L."/>
            <person name="Kalicki J."/>
            <person name="Ozersky P."/>
            <person name="Abbott S."/>
            <person name="Armstrong J."/>
            <person name="Belter E.A."/>
            <person name="Caruso L."/>
            <person name="Cedroni M."/>
            <person name="Cotton M."/>
            <person name="Davidson T."/>
            <person name="Desai A."/>
            <person name="Elliott G."/>
            <person name="Erb T."/>
            <person name="Fronick C."/>
            <person name="Gaige T."/>
            <person name="Haakenson W."/>
            <person name="Haglund K."/>
            <person name="Holmes A."/>
            <person name="Harkins R."/>
            <person name="Kim K."/>
            <person name="Kruchowski S.S."/>
            <person name="Strong C.M."/>
            <person name="Grewal N."/>
            <person name="Goyea E."/>
            <person name="Hou S."/>
            <person name="Levy A."/>
            <person name="Martinka S."/>
            <person name="Mead K."/>
            <person name="McLellan M.D."/>
            <person name="Meyer R."/>
            <person name="Randall-Maher J."/>
            <person name="Tomlinson C."/>
            <person name="Dauphin-Kohlberg S."/>
            <person name="Kozlowicz-Reilly A."/>
            <person name="Shah N."/>
            <person name="Swearengen-Shahid S."/>
            <person name="Snider J."/>
            <person name="Strong J.T."/>
            <person name="Thompson J."/>
            <person name="Yoakum M."/>
            <person name="Leonard S."/>
            <person name="Pearman C."/>
            <person name="Trani L."/>
            <person name="Radionenko M."/>
            <person name="Waligorski J.E."/>
            <person name="Wang C."/>
            <person name="Rock S.M."/>
            <person name="Tin-Wollam A.-M."/>
            <person name="Maupin R."/>
            <person name="Latreille P."/>
            <person name="Wendl M.C."/>
            <person name="Yang S.-P."/>
            <person name="Pohl C."/>
            <person name="Wallis J.W."/>
            <person name="Spieth J."/>
            <person name="Bieri T.A."/>
            <person name="Berkowicz N."/>
            <person name="Nelson J.O."/>
            <person name="Osborne J."/>
            <person name="Ding L."/>
            <person name="Meyer R."/>
            <person name="Sabo A."/>
            <person name="Shotland Y."/>
            <person name="Sinha P."/>
            <person name="Wohldmann P.E."/>
            <person name="Cook L.L."/>
            <person name="Hickenbotham M.T."/>
            <person name="Eldred J."/>
            <person name="Williams D."/>
            <person name="Jones T.A."/>
            <person name="She X."/>
            <person name="Ciccarelli F.D."/>
            <person name="Izaurralde E."/>
            <person name="Taylor J."/>
            <person name="Schmutz J."/>
            <person name="Myers R.M."/>
            <person name="Cox D.R."/>
            <person name="Huang X."/>
            <person name="McPherson J.D."/>
            <person name="Mardis E.R."/>
            <person name="Clifton S.W."/>
            <person name="Warren W.C."/>
            <person name="Chinwalla A.T."/>
            <person name="Eddy S.R."/>
            <person name="Marra M.A."/>
            <person name="Ovcharenko I."/>
            <person name="Furey T.S."/>
            <person name="Miller W."/>
            <person name="Eichler E.E."/>
            <person name="Bork P."/>
            <person name="Suyama M."/>
            <person name="Torrents D."/>
            <person name="Waterston R.H."/>
            <person name="Wilson R.K."/>
        </authorList>
    </citation>
    <scope>NUCLEOTIDE SEQUENCE [LARGE SCALE GENOMIC DNA]</scope>
</reference>
<reference key="3">
    <citation type="journal article" date="2004" name="Genome Res.">
        <title>The status, quality, and expansion of the NIH full-length cDNA project: the Mammalian Gene Collection (MGC).</title>
        <authorList>
            <consortium name="The MGC Project Team"/>
        </authorList>
    </citation>
    <scope>NUCLEOTIDE SEQUENCE [LARGE SCALE MRNA]</scope>
    <source>
        <tissue>Testis</tissue>
    </source>
</reference>
<reference key="4">
    <citation type="journal article" date="2006" name="Nat. Biotechnol.">
        <title>A probability-based approach for high-throughput protein phosphorylation analysis and site localization.</title>
        <authorList>
            <person name="Beausoleil S.A."/>
            <person name="Villen J."/>
            <person name="Gerber S.A."/>
            <person name="Rush J."/>
            <person name="Gygi S.P."/>
        </authorList>
    </citation>
    <scope>PHOSPHORYLATION [LARGE SCALE ANALYSIS] AT SER-226</scope>
    <scope>IDENTIFICATION BY MASS SPECTROMETRY [LARGE SCALE ANALYSIS]</scope>
    <source>
        <tissue>Cervix carcinoma</tissue>
    </source>
</reference>
<reference key="5">
    <citation type="journal article" date="2008" name="Proc. Natl. Acad. Sci. U.S.A.">
        <title>A quantitative atlas of mitotic phosphorylation.</title>
        <authorList>
            <person name="Dephoure N."/>
            <person name="Zhou C."/>
            <person name="Villen J."/>
            <person name="Beausoleil S.A."/>
            <person name="Bakalarski C.E."/>
            <person name="Elledge S.J."/>
            <person name="Gygi S.P."/>
        </authorList>
    </citation>
    <scope>PHOSPHORYLATION [LARGE SCALE ANALYSIS] AT SER-213</scope>
    <scope>IDENTIFICATION BY MASS SPECTROMETRY [LARGE SCALE ANALYSIS]</scope>
    <source>
        <tissue>Cervix carcinoma</tissue>
    </source>
</reference>
<reference key="6">
    <citation type="journal article" date="2010" name="Sci. Signal.">
        <title>Quantitative phosphoproteomics reveals widespread full phosphorylation site occupancy during mitosis.</title>
        <authorList>
            <person name="Olsen J.V."/>
            <person name="Vermeulen M."/>
            <person name="Santamaria A."/>
            <person name="Kumar C."/>
            <person name="Miller M.L."/>
            <person name="Jensen L.J."/>
            <person name="Gnad F."/>
            <person name="Cox J."/>
            <person name="Jensen T.S."/>
            <person name="Nigg E.A."/>
            <person name="Brunak S."/>
            <person name="Mann M."/>
        </authorList>
    </citation>
    <scope>PHOSPHORYLATION [LARGE SCALE ANALYSIS] AT SER-213</scope>
    <scope>IDENTIFICATION BY MASS SPECTROMETRY [LARGE SCALE ANALYSIS]</scope>
    <source>
        <tissue>Cervix carcinoma</tissue>
    </source>
</reference>
<reference key="7">
    <citation type="journal article" date="2011" name="BMC Syst. Biol.">
        <title>Initial characterization of the human central proteome.</title>
        <authorList>
            <person name="Burkard T.R."/>
            <person name="Planyavsky M."/>
            <person name="Kaupe I."/>
            <person name="Breitwieser F.P."/>
            <person name="Buerckstuemmer T."/>
            <person name="Bennett K.L."/>
            <person name="Superti-Furga G."/>
            <person name="Colinge J."/>
        </authorList>
    </citation>
    <scope>IDENTIFICATION BY MASS SPECTROMETRY [LARGE SCALE ANALYSIS]</scope>
</reference>
<reference key="8">
    <citation type="journal article" date="2013" name="J. Proteome Res.">
        <title>Toward a comprehensive characterization of a human cancer cell phosphoproteome.</title>
        <authorList>
            <person name="Zhou H."/>
            <person name="Di Palma S."/>
            <person name="Preisinger C."/>
            <person name="Peng M."/>
            <person name="Polat A.N."/>
            <person name="Heck A.J."/>
            <person name="Mohammed S."/>
        </authorList>
    </citation>
    <scope>PHOSPHORYLATION [LARGE SCALE ANALYSIS] AT SER-213</scope>
    <scope>IDENTIFICATION BY MASS SPECTROMETRY [LARGE SCALE ANALYSIS]</scope>
    <source>
        <tissue>Cervix carcinoma</tissue>
    </source>
</reference>
<reference key="9">
    <citation type="journal article" date="2014" name="J. Proteomics">
        <title>An enzyme assisted RP-RPLC approach for in-depth analysis of human liver phosphoproteome.</title>
        <authorList>
            <person name="Bian Y."/>
            <person name="Song C."/>
            <person name="Cheng K."/>
            <person name="Dong M."/>
            <person name="Wang F."/>
            <person name="Huang J."/>
            <person name="Sun D."/>
            <person name="Wang L."/>
            <person name="Ye M."/>
            <person name="Zou H."/>
        </authorList>
    </citation>
    <scope>PHOSPHORYLATION [LARGE SCALE ANALYSIS] AT SER-126</scope>
    <scope>IDENTIFICATION BY MASS SPECTROMETRY [LARGE SCALE ANALYSIS]</scope>
    <source>
        <tissue>Liver</tissue>
    </source>
</reference>
<comment type="similarity">
    <text evidence="3">Belongs to the SOWAH family.</text>
</comment>
<comment type="sequence caution" evidence="3">
    <conflict type="frameshift">
        <sequence resource="EMBL-CDS" id="BAB15161"/>
    </conflict>
</comment>
<organism>
    <name type="scientific">Homo sapiens</name>
    <name type="common">Human</name>
    <dbReference type="NCBI Taxonomy" id="9606"/>
    <lineage>
        <taxon>Eukaryota</taxon>
        <taxon>Metazoa</taxon>
        <taxon>Chordata</taxon>
        <taxon>Craniata</taxon>
        <taxon>Vertebrata</taxon>
        <taxon>Euteleostomi</taxon>
        <taxon>Mammalia</taxon>
        <taxon>Eutheria</taxon>
        <taxon>Euarchontoglires</taxon>
        <taxon>Primates</taxon>
        <taxon>Haplorrhini</taxon>
        <taxon>Catarrhini</taxon>
        <taxon>Hominidae</taxon>
        <taxon>Homo</taxon>
    </lineage>
</organism>
<keyword id="KW-0040">ANK repeat</keyword>
<keyword id="KW-0597">Phosphoprotein</keyword>
<keyword id="KW-1267">Proteomics identification</keyword>
<keyword id="KW-1185">Reference proteome</keyword>
<keyword id="KW-0677">Repeat</keyword>